<organism>
    <name type="scientific">Staphylococcus aureus (strain bovine RF122 / ET3-1)</name>
    <dbReference type="NCBI Taxonomy" id="273036"/>
    <lineage>
        <taxon>Bacteria</taxon>
        <taxon>Bacillati</taxon>
        <taxon>Bacillota</taxon>
        <taxon>Bacilli</taxon>
        <taxon>Bacillales</taxon>
        <taxon>Staphylococcaceae</taxon>
        <taxon>Staphylococcus</taxon>
    </lineage>
</organism>
<dbReference type="EC" id="4.4.1.21" evidence="1"/>
<dbReference type="EMBL" id="AJ938182">
    <property type="protein sequence ID" value="CAI81707.1"/>
    <property type="molecule type" value="Genomic_DNA"/>
</dbReference>
<dbReference type="RefSeq" id="WP_000164423.1">
    <property type="nucleotide sequence ID" value="NC_007622.1"/>
</dbReference>
<dbReference type="SMR" id="Q2YUL9"/>
<dbReference type="KEGG" id="sab:SAB2018"/>
<dbReference type="HOGENOM" id="CLU_107531_2_0_9"/>
<dbReference type="GO" id="GO:0005506">
    <property type="term" value="F:iron ion binding"/>
    <property type="evidence" value="ECO:0007669"/>
    <property type="project" value="InterPro"/>
</dbReference>
<dbReference type="GO" id="GO:0043768">
    <property type="term" value="F:S-ribosylhomocysteine lyase activity"/>
    <property type="evidence" value="ECO:0007669"/>
    <property type="project" value="UniProtKB-UniRule"/>
</dbReference>
<dbReference type="GO" id="GO:0009372">
    <property type="term" value="P:quorum sensing"/>
    <property type="evidence" value="ECO:0007669"/>
    <property type="project" value="UniProtKB-UniRule"/>
</dbReference>
<dbReference type="Gene3D" id="3.30.1360.80">
    <property type="entry name" value="S-ribosylhomocysteinase (LuxS)"/>
    <property type="match status" value="1"/>
</dbReference>
<dbReference type="HAMAP" id="MF_00091">
    <property type="entry name" value="LuxS"/>
    <property type="match status" value="1"/>
</dbReference>
<dbReference type="InterPro" id="IPR037005">
    <property type="entry name" value="LuxS_sf"/>
</dbReference>
<dbReference type="InterPro" id="IPR011249">
    <property type="entry name" value="Metalloenz_LuxS/M16"/>
</dbReference>
<dbReference type="InterPro" id="IPR003815">
    <property type="entry name" value="S-ribosylhomocysteinase"/>
</dbReference>
<dbReference type="NCBIfam" id="NF002604">
    <property type="entry name" value="PRK02260.1-4"/>
    <property type="match status" value="1"/>
</dbReference>
<dbReference type="PANTHER" id="PTHR35799">
    <property type="entry name" value="S-RIBOSYLHOMOCYSTEINE LYASE"/>
    <property type="match status" value="1"/>
</dbReference>
<dbReference type="PANTHER" id="PTHR35799:SF1">
    <property type="entry name" value="S-RIBOSYLHOMOCYSTEINE LYASE"/>
    <property type="match status" value="1"/>
</dbReference>
<dbReference type="Pfam" id="PF02664">
    <property type="entry name" value="LuxS"/>
    <property type="match status" value="1"/>
</dbReference>
<dbReference type="PIRSF" id="PIRSF006160">
    <property type="entry name" value="AI2"/>
    <property type="match status" value="1"/>
</dbReference>
<dbReference type="PRINTS" id="PR01487">
    <property type="entry name" value="LUXSPROTEIN"/>
</dbReference>
<dbReference type="SUPFAM" id="SSF63411">
    <property type="entry name" value="LuxS/MPP-like metallohydrolase"/>
    <property type="match status" value="1"/>
</dbReference>
<sequence length="156" mass="17540">MTKMNVESFNLDHTKVVAPFIRLAGTMEGLNGDVIYKYDIRFKQPNKEHMDMPGLHSLEHLMAENIRNHSDKVVDLSPMGCQTGFYVSFINHDNYDDVLNIVEATLNDVLNATEVPACNEVQCGWAASHSLEGAKTIAQAFLDKRNEWHDVFGTGK</sequence>
<proteinExistence type="inferred from homology"/>
<accession>Q2YUL9</accession>
<keyword id="KW-0071">Autoinducer synthesis</keyword>
<keyword id="KW-0408">Iron</keyword>
<keyword id="KW-0456">Lyase</keyword>
<keyword id="KW-0479">Metal-binding</keyword>
<keyword id="KW-0673">Quorum sensing</keyword>
<gene>
    <name evidence="1" type="primary">luxS</name>
    <name type="ordered locus">SAB2018</name>
</gene>
<evidence type="ECO:0000255" key="1">
    <source>
        <dbReference type="HAMAP-Rule" id="MF_00091"/>
    </source>
</evidence>
<comment type="function">
    <text evidence="1">Involved in the synthesis of autoinducer 2 (AI-2) which is secreted by bacteria and is used to communicate both the cell density and the metabolic potential of the environment. The regulation of gene expression in response to changes in cell density is called quorum sensing. Catalyzes the transformation of S-ribosylhomocysteine (RHC) to homocysteine (HC) and 4,5-dihydroxy-2,3-pentadione (DPD).</text>
</comment>
<comment type="catalytic activity">
    <reaction evidence="1">
        <text>S-(5-deoxy-D-ribos-5-yl)-L-homocysteine = (S)-4,5-dihydroxypentane-2,3-dione + L-homocysteine</text>
        <dbReference type="Rhea" id="RHEA:17753"/>
        <dbReference type="ChEBI" id="CHEBI:29484"/>
        <dbReference type="ChEBI" id="CHEBI:58195"/>
        <dbReference type="ChEBI" id="CHEBI:58199"/>
        <dbReference type="EC" id="4.4.1.21"/>
    </reaction>
</comment>
<comment type="cofactor">
    <cofactor evidence="1">
        <name>Fe cation</name>
        <dbReference type="ChEBI" id="CHEBI:24875"/>
    </cofactor>
    <text evidence="1">Binds 1 Fe cation per subunit.</text>
</comment>
<comment type="subunit">
    <text evidence="1">Homodimer.</text>
</comment>
<comment type="similarity">
    <text evidence="1">Belongs to the LuxS family.</text>
</comment>
<feature type="chain" id="PRO_0000298035" description="S-ribosylhomocysteine lyase">
    <location>
        <begin position="1"/>
        <end position="156"/>
    </location>
</feature>
<feature type="binding site" evidence="1">
    <location>
        <position position="56"/>
    </location>
    <ligand>
        <name>Fe cation</name>
        <dbReference type="ChEBI" id="CHEBI:24875"/>
    </ligand>
</feature>
<feature type="binding site" evidence="1">
    <location>
        <position position="60"/>
    </location>
    <ligand>
        <name>Fe cation</name>
        <dbReference type="ChEBI" id="CHEBI:24875"/>
    </ligand>
</feature>
<feature type="binding site" evidence="1">
    <location>
        <position position="123"/>
    </location>
    <ligand>
        <name>Fe cation</name>
        <dbReference type="ChEBI" id="CHEBI:24875"/>
    </ligand>
</feature>
<protein>
    <recommendedName>
        <fullName evidence="1">S-ribosylhomocysteine lyase</fullName>
        <ecNumber evidence="1">4.4.1.21</ecNumber>
    </recommendedName>
    <alternativeName>
        <fullName evidence="1">AI-2 synthesis protein</fullName>
    </alternativeName>
    <alternativeName>
        <fullName evidence="1">Autoinducer-2 production protein LuxS</fullName>
    </alternativeName>
</protein>
<reference key="1">
    <citation type="journal article" date="2007" name="PLoS ONE">
        <title>Molecular correlates of host specialization in Staphylococcus aureus.</title>
        <authorList>
            <person name="Herron-Olson L."/>
            <person name="Fitzgerald J.R."/>
            <person name="Musser J.M."/>
            <person name="Kapur V."/>
        </authorList>
    </citation>
    <scope>NUCLEOTIDE SEQUENCE [LARGE SCALE GENOMIC DNA]</scope>
    <source>
        <strain>bovine RF122 / ET3-1</strain>
    </source>
</reference>
<name>LUXS_STAAB</name>